<keyword id="KW-0067">ATP-binding</keyword>
<keyword id="KW-1003">Cell membrane</keyword>
<keyword id="KW-0472">Membrane</keyword>
<keyword id="KW-0547">Nucleotide-binding</keyword>
<keyword id="KW-1278">Translocase</keyword>
<keyword id="KW-0813">Transport</keyword>
<sequence>MKIKAKNIVKIYDQKLPSELKALDKVTTEINQGEFIAIIGQTGSGKTTFIQHMNALLLPDQGEIEYLYFDSKNQEKKLVVQKPRFFRKKLKFINEIRRRVGVVFQFAEYQLFEQTIEKDIIFGAVSMGTPKNEAKKIAAEIIELVGLDQSFLQKSPFELSGGQKRRVAIAGILAMDPDIIFFDEPTAGLDPQGTLKMLEILDTLYKKGKTIILATHDLDSVLEWTKRCIFFKDGRIIYDGDTYSILANNKFLIENKMLPTNLLNFREKLIKIGYPISNVRSVSELISEINMLIQKETNAD</sequence>
<name>ECFA2_MESHJ</name>
<dbReference type="EC" id="7.-.-.-" evidence="1"/>
<dbReference type="EMBL" id="AE017243">
    <property type="protein sequence ID" value="AAZ44347.1"/>
    <property type="molecule type" value="Genomic_DNA"/>
</dbReference>
<dbReference type="RefSeq" id="WP_011205953.1">
    <property type="nucleotide sequence ID" value="NC_007295.1"/>
</dbReference>
<dbReference type="SMR" id="Q4AA74"/>
<dbReference type="GeneID" id="41334562"/>
<dbReference type="KEGG" id="mhj:MHJ_0256"/>
<dbReference type="eggNOG" id="COG1122">
    <property type="taxonomic scope" value="Bacteria"/>
</dbReference>
<dbReference type="HOGENOM" id="CLU_000604_1_22_14"/>
<dbReference type="OrthoDB" id="9784332at2"/>
<dbReference type="Proteomes" id="UP000000548">
    <property type="component" value="Chromosome"/>
</dbReference>
<dbReference type="GO" id="GO:0043190">
    <property type="term" value="C:ATP-binding cassette (ABC) transporter complex"/>
    <property type="evidence" value="ECO:0007669"/>
    <property type="project" value="TreeGrafter"/>
</dbReference>
<dbReference type="GO" id="GO:0005524">
    <property type="term" value="F:ATP binding"/>
    <property type="evidence" value="ECO:0007669"/>
    <property type="project" value="UniProtKB-KW"/>
</dbReference>
<dbReference type="GO" id="GO:0016887">
    <property type="term" value="F:ATP hydrolysis activity"/>
    <property type="evidence" value="ECO:0007669"/>
    <property type="project" value="InterPro"/>
</dbReference>
<dbReference type="GO" id="GO:0042626">
    <property type="term" value="F:ATPase-coupled transmembrane transporter activity"/>
    <property type="evidence" value="ECO:0007669"/>
    <property type="project" value="TreeGrafter"/>
</dbReference>
<dbReference type="CDD" id="cd03225">
    <property type="entry name" value="ABC_cobalt_CbiO_domain1"/>
    <property type="match status" value="1"/>
</dbReference>
<dbReference type="FunFam" id="3.40.50.300:FF:000224">
    <property type="entry name" value="Energy-coupling factor transporter ATP-binding protein EcfA"/>
    <property type="match status" value="1"/>
</dbReference>
<dbReference type="Gene3D" id="3.40.50.300">
    <property type="entry name" value="P-loop containing nucleotide triphosphate hydrolases"/>
    <property type="match status" value="1"/>
</dbReference>
<dbReference type="InterPro" id="IPR003593">
    <property type="entry name" value="AAA+_ATPase"/>
</dbReference>
<dbReference type="InterPro" id="IPR003439">
    <property type="entry name" value="ABC_transporter-like_ATP-bd"/>
</dbReference>
<dbReference type="InterPro" id="IPR017871">
    <property type="entry name" value="ABC_transporter-like_CS"/>
</dbReference>
<dbReference type="InterPro" id="IPR015856">
    <property type="entry name" value="ABC_transpr_CbiO/EcfA_su"/>
</dbReference>
<dbReference type="InterPro" id="IPR050095">
    <property type="entry name" value="ECF_ABC_transporter_ATP-bd"/>
</dbReference>
<dbReference type="InterPro" id="IPR027417">
    <property type="entry name" value="P-loop_NTPase"/>
</dbReference>
<dbReference type="NCBIfam" id="NF010170">
    <property type="entry name" value="PRK13651.1"/>
    <property type="match status" value="1"/>
</dbReference>
<dbReference type="PANTHER" id="PTHR43553:SF27">
    <property type="entry name" value="ENERGY-COUPLING FACTOR TRANSPORTER ATP-BINDING PROTEIN ECFA2"/>
    <property type="match status" value="1"/>
</dbReference>
<dbReference type="PANTHER" id="PTHR43553">
    <property type="entry name" value="HEAVY METAL TRANSPORTER"/>
    <property type="match status" value="1"/>
</dbReference>
<dbReference type="Pfam" id="PF00005">
    <property type="entry name" value="ABC_tran"/>
    <property type="match status" value="1"/>
</dbReference>
<dbReference type="SMART" id="SM00382">
    <property type="entry name" value="AAA"/>
    <property type="match status" value="1"/>
</dbReference>
<dbReference type="SUPFAM" id="SSF52540">
    <property type="entry name" value="P-loop containing nucleoside triphosphate hydrolases"/>
    <property type="match status" value="1"/>
</dbReference>
<dbReference type="PROSITE" id="PS00211">
    <property type="entry name" value="ABC_TRANSPORTER_1"/>
    <property type="match status" value="1"/>
</dbReference>
<dbReference type="PROSITE" id="PS50893">
    <property type="entry name" value="ABC_TRANSPORTER_2"/>
    <property type="match status" value="1"/>
</dbReference>
<dbReference type="PROSITE" id="PS51246">
    <property type="entry name" value="CBIO"/>
    <property type="match status" value="1"/>
</dbReference>
<organism>
    <name type="scientific">Mesomycoplasma hyopneumoniae (strain J / ATCC 25934 / NCTC 10110)</name>
    <name type="common">Mycoplasma hyopneumoniae</name>
    <dbReference type="NCBI Taxonomy" id="262719"/>
    <lineage>
        <taxon>Bacteria</taxon>
        <taxon>Bacillati</taxon>
        <taxon>Mycoplasmatota</taxon>
        <taxon>Mycoplasmoidales</taxon>
        <taxon>Metamycoplasmataceae</taxon>
        <taxon>Mesomycoplasma</taxon>
    </lineage>
</organism>
<gene>
    <name evidence="1" type="primary">ecfA2</name>
    <name type="synonym">cbiO2</name>
    <name type="ordered locus">MHJ_0256</name>
</gene>
<feature type="chain" id="PRO_0000287973" description="Energy-coupling factor transporter ATP-binding protein EcfA2">
    <location>
        <begin position="1"/>
        <end position="300"/>
    </location>
</feature>
<feature type="domain" description="ABC transporter" evidence="1">
    <location>
        <begin position="3"/>
        <end position="258"/>
    </location>
</feature>
<feature type="binding site" evidence="1">
    <location>
        <begin position="40"/>
        <end position="47"/>
    </location>
    <ligand>
        <name>ATP</name>
        <dbReference type="ChEBI" id="CHEBI:30616"/>
    </ligand>
</feature>
<proteinExistence type="inferred from homology"/>
<protein>
    <recommendedName>
        <fullName evidence="1">Energy-coupling factor transporter ATP-binding protein EcfA2</fullName>
        <shortName evidence="1">ECF transporter A component EcfA2</shortName>
        <ecNumber evidence="1">7.-.-.-</ecNumber>
    </recommendedName>
</protein>
<accession>Q4AA74</accession>
<comment type="function">
    <text evidence="1">ATP-binding (A) component of a common energy-coupling factor (ECF) ABC-transporter complex. Unlike classic ABC transporters this ECF transporter provides the energy necessary to transport a number of different substrates.</text>
</comment>
<comment type="subunit">
    <text evidence="1">Forms a stable energy-coupling factor (ECF) transporter complex composed of 2 membrane-embedded substrate-binding proteins (S component), 2 ATP-binding proteins (A component) and 2 transmembrane proteins (T component).</text>
</comment>
<comment type="subcellular location">
    <subcellularLocation>
        <location evidence="1">Cell membrane</location>
        <topology evidence="1">Peripheral membrane protein</topology>
    </subcellularLocation>
</comment>
<comment type="similarity">
    <text evidence="1">Belongs to the ABC transporter superfamily. Energy-coupling factor EcfA family.</text>
</comment>
<reference key="1">
    <citation type="journal article" date="2005" name="J. Bacteriol.">
        <title>Swine and poultry pathogens: the complete genome sequences of two strains of Mycoplasma hyopneumoniae and a strain of Mycoplasma synoviae.</title>
        <authorList>
            <person name="Vasconcelos A.T.R."/>
            <person name="Ferreira H.B."/>
            <person name="Bizarro C.V."/>
            <person name="Bonatto S.L."/>
            <person name="Carvalho M.O."/>
            <person name="Pinto P.M."/>
            <person name="Almeida D.F."/>
            <person name="Almeida L.G.P."/>
            <person name="Almeida R."/>
            <person name="Alves-Junior L."/>
            <person name="Assuncao E.N."/>
            <person name="Azevedo V.A.C."/>
            <person name="Bogo M.R."/>
            <person name="Brigido M.M."/>
            <person name="Brocchi M."/>
            <person name="Burity H.A."/>
            <person name="Camargo A.A."/>
            <person name="Camargo S.S."/>
            <person name="Carepo M.S."/>
            <person name="Carraro D.M."/>
            <person name="de Mattos Cascardo J.C."/>
            <person name="Castro L.A."/>
            <person name="Cavalcanti G."/>
            <person name="Chemale G."/>
            <person name="Collevatti R.G."/>
            <person name="Cunha C.W."/>
            <person name="Dallagiovanna B."/>
            <person name="Dambros B.P."/>
            <person name="Dellagostin O.A."/>
            <person name="Falcao C."/>
            <person name="Fantinatti-Garboggini F."/>
            <person name="Felipe M.S.S."/>
            <person name="Fiorentin L."/>
            <person name="Franco G.R."/>
            <person name="Freitas N.S.A."/>
            <person name="Frias D."/>
            <person name="Grangeiro T.B."/>
            <person name="Grisard E.C."/>
            <person name="Guimaraes C.T."/>
            <person name="Hungria M."/>
            <person name="Jardim S.N."/>
            <person name="Krieger M.A."/>
            <person name="Laurino J.P."/>
            <person name="Lima L.F.A."/>
            <person name="Lopes M.I."/>
            <person name="Loreto E.L.S."/>
            <person name="Madeira H.M.F."/>
            <person name="Manfio G.P."/>
            <person name="Maranhao A.Q."/>
            <person name="Martinkovics C.T."/>
            <person name="Medeiros S.R.B."/>
            <person name="Moreira M.A.M."/>
            <person name="Neiva M."/>
            <person name="Ramalho-Neto C.E."/>
            <person name="Nicolas M.F."/>
            <person name="Oliveira S.C."/>
            <person name="Paixao R.F.C."/>
            <person name="Pedrosa F.O."/>
            <person name="Pena S.D.J."/>
            <person name="Pereira M."/>
            <person name="Pereira-Ferrari L."/>
            <person name="Piffer I."/>
            <person name="Pinto L.S."/>
            <person name="Potrich D.P."/>
            <person name="Salim A.C.M."/>
            <person name="Santos F.R."/>
            <person name="Schmitt R."/>
            <person name="Schneider M.P.C."/>
            <person name="Schrank A."/>
            <person name="Schrank I.S."/>
            <person name="Schuck A.F."/>
            <person name="Seuanez H.N."/>
            <person name="Silva D.W."/>
            <person name="Silva R."/>
            <person name="Silva S.C."/>
            <person name="Soares C.M.A."/>
            <person name="Souza K.R.L."/>
            <person name="Souza R.C."/>
            <person name="Staats C.C."/>
            <person name="Steffens M.B.R."/>
            <person name="Teixeira S.M.R."/>
            <person name="Urmenyi T.P."/>
            <person name="Vainstein M.H."/>
            <person name="Zuccherato L.W."/>
            <person name="Simpson A.J.G."/>
            <person name="Zaha A."/>
        </authorList>
    </citation>
    <scope>NUCLEOTIDE SEQUENCE [LARGE SCALE GENOMIC DNA]</scope>
    <source>
        <strain>J / ATCC 25934 / NCTC 10110</strain>
    </source>
</reference>
<evidence type="ECO:0000255" key="1">
    <source>
        <dbReference type="HAMAP-Rule" id="MF_01710"/>
    </source>
</evidence>